<comment type="function">
    <text evidence="1">Secreted tripeptidyl-peptidase which degrades proteins at acidic pHs and is involved in virulence.</text>
</comment>
<comment type="catalytic activity">
    <reaction>
        <text>Release of an N-terminal tripeptide from a polypeptide.</text>
        <dbReference type="EC" id="3.4.14.10"/>
    </reaction>
</comment>
<comment type="cofactor">
    <cofactor evidence="1">
        <name>Ca(2+)</name>
        <dbReference type="ChEBI" id="CHEBI:29108"/>
    </cofactor>
    <text evidence="1">Binds 1 Ca(2+) ion per subunit.</text>
</comment>
<comment type="subcellular location">
    <subcellularLocation>
        <location evidence="1">Secreted</location>
        <location evidence="1">Extracellular space</location>
    </subcellularLocation>
</comment>
<keyword id="KW-0106">Calcium</keyword>
<keyword id="KW-0325">Glycoprotein</keyword>
<keyword id="KW-0378">Hydrolase</keyword>
<keyword id="KW-0479">Metal-binding</keyword>
<keyword id="KW-0645">Protease</keyword>
<keyword id="KW-1185">Reference proteome</keyword>
<keyword id="KW-0964">Secreted</keyword>
<keyword id="KW-0720">Serine protease</keyword>
<keyword id="KW-0732">Signal</keyword>
<keyword id="KW-0843">Virulence</keyword>
<keyword id="KW-0865">Zymogen</keyword>
<organism>
    <name type="scientific">Arthroderma otae (strain ATCC MYA-4605 / CBS 113480)</name>
    <name type="common">Microsporum canis</name>
    <dbReference type="NCBI Taxonomy" id="554155"/>
    <lineage>
        <taxon>Eukaryota</taxon>
        <taxon>Fungi</taxon>
        <taxon>Dikarya</taxon>
        <taxon>Ascomycota</taxon>
        <taxon>Pezizomycotina</taxon>
        <taxon>Eurotiomycetes</taxon>
        <taxon>Eurotiomycetidae</taxon>
        <taxon>Onygenales</taxon>
        <taxon>Arthrodermataceae</taxon>
        <taxon>Microsporum</taxon>
    </lineage>
</organism>
<evidence type="ECO:0000250" key="1"/>
<evidence type="ECO:0000255" key="2"/>
<feature type="signal peptide" evidence="2">
    <location>
        <begin position="1"/>
        <end position="22"/>
    </location>
</feature>
<feature type="propeptide" id="PRO_0000390752" description="Removed in mature form" evidence="1">
    <location>
        <begin position="23"/>
        <end position="202"/>
    </location>
</feature>
<feature type="chain" id="PRO_0000390753" description="Tripeptidyl-peptidase SED4">
    <location>
        <begin position="203"/>
        <end position="601"/>
    </location>
</feature>
<feature type="domain" description="Peptidase S53">
    <location>
        <begin position="212"/>
        <end position="601"/>
    </location>
</feature>
<feature type="active site" description="Charge relay system" evidence="1">
    <location>
        <position position="288"/>
    </location>
</feature>
<feature type="active site" description="Charge relay system" evidence="1">
    <location>
        <position position="292"/>
    </location>
</feature>
<feature type="active site" description="Charge relay system" evidence="1">
    <location>
        <position position="504"/>
    </location>
</feature>
<feature type="binding site" evidence="1">
    <location>
        <position position="546"/>
    </location>
    <ligand>
        <name>Ca(2+)</name>
        <dbReference type="ChEBI" id="CHEBI:29108"/>
    </ligand>
</feature>
<feature type="binding site" evidence="1">
    <location>
        <position position="547"/>
    </location>
    <ligand>
        <name>Ca(2+)</name>
        <dbReference type="ChEBI" id="CHEBI:29108"/>
    </ligand>
</feature>
<feature type="binding site" evidence="1">
    <location>
        <position position="579"/>
    </location>
    <ligand>
        <name>Ca(2+)</name>
        <dbReference type="ChEBI" id="CHEBI:29108"/>
    </ligand>
</feature>
<feature type="binding site" evidence="1">
    <location>
        <position position="581"/>
    </location>
    <ligand>
        <name>Ca(2+)</name>
        <dbReference type="ChEBI" id="CHEBI:29108"/>
    </ligand>
</feature>
<feature type="glycosylation site" description="N-linked (GlcNAc...) asparagine" evidence="2">
    <location>
        <position position="210"/>
    </location>
</feature>
<feature type="glycosylation site" description="N-linked (GlcNAc...) asparagine" evidence="2">
    <location>
        <position position="281"/>
    </location>
</feature>
<feature type="glycosylation site" description="N-linked (GlcNAc...) asparagine" evidence="2">
    <location>
        <position position="323"/>
    </location>
</feature>
<feature type="glycosylation site" description="N-linked (GlcNAc...) asparagine" evidence="2">
    <location>
        <position position="575"/>
    </location>
</feature>
<name>SED4_ARTOC</name>
<protein>
    <recommendedName>
        <fullName>Tripeptidyl-peptidase SED4</fullName>
        <ecNumber>3.4.14.10</ecNumber>
    </recommendedName>
    <alternativeName>
        <fullName>Sedolisin-D</fullName>
    </alternativeName>
</protein>
<accession>C5FRX4</accession>
<reference key="1">
    <citation type="journal article" date="2012" name="MBio">
        <title>Comparative genome analysis of Trichophyton rubrum and related dermatophytes reveals candidate genes involved in infection.</title>
        <authorList>
            <person name="Martinez D.A."/>
            <person name="Oliver B.G."/>
            <person name="Graeser Y."/>
            <person name="Goldberg J.M."/>
            <person name="Li W."/>
            <person name="Martinez-Rossi N.M."/>
            <person name="Monod M."/>
            <person name="Shelest E."/>
            <person name="Barton R.C."/>
            <person name="Birch E."/>
            <person name="Brakhage A.A."/>
            <person name="Chen Z."/>
            <person name="Gurr S.J."/>
            <person name="Heiman D."/>
            <person name="Heitman J."/>
            <person name="Kosti I."/>
            <person name="Rossi A."/>
            <person name="Saif S."/>
            <person name="Samalova M."/>
            <person name="Saunders C.W."/>
            <person name="Shea T."/>
            <person name="Summerbell R.C."/>
            <person name="Xu J."/>
            <person name="Young S."/>
            <person name="Zeng Q."/>
            <person name="Birren B.W."/>
            <person name="Cuomo C.A."/>
            <person name="White T.C."/>
        </authorList>
    </citation>
    <scope>NUCLEOTIDE SEQUENCE [LARGE SCALE GENOMIC DNA]</scope>
    <source>
        <strain>ATCC MYA-4605 / CBS 113480</strain>
    </source>
</reference>
<dbReference type="EC" id="3.4.14.10"/>
<dbReference type="EMBL" id="DS995705">
    <property type="protein sequence ID" value="EEQ32627.1"/>
    <property type="molecule type" value="Genomic_DNA"/>
</dbReference>
<dbReference type="RefSeq" id="XP_002845577.1">
    <property type="nucleotide sequence ID" value="XM_002845531.1"/>
</dbReference>
<dbReference type="SMR" id="C5FRX4"/>
<dbReference type="STRING" id="554155.C5FRX4"/>
<dbReference type="GlyCosmos" id="C5FRX4">
    <property type="glycosylation" value="4 sites, No reported glycans"/>
</dbReference>
<dbReference type="GeneID" id="9224263"/>
<dbReference type="VEuPathDB" id="FungiDB:MCYG_05446"/>
<dbReference type="eggNOG" id="ENOG502QR6D">
    <property type="taxonomic scope" value="Eukaryota"/>
</dbReference>
<dbReference type="HOGENOM" id="CLU_013783_3_0_1"/>
<dbReference type="OMA" id="VTITPDC"/>
<dbReference type="OrthoDB" id="409122at2759"/>
<dbReference type="Proteomes" id="UP000002035">
    <property type="component" value="Unassembled WGS sequence"/>
</dbReference>
<dbReference type="GO" id="GO:0005576">
    <property type="term" value="C:extracellular region"/>
    <property type="evidence" value="ECO:0007669"/>
    <property type="project" value="UniProtKB-SubCell"/>
</dbReference>
<dbReference type="GO" id="GO:0046872">
    <property type="term" value="F:metal ion binding"/>
    <property type="evidence" value="ECO:0007669"/>
    <property type="project" value="UniProtKB-KW"/>
</dbReference>
<dbReference type="GO" id="GO:0004252">
    <property type="term" value="F:serine-type endopeptidase activity"/>
    <property type="evidence" value="ECO:0007669"/>
    <property type="project" value="InterPro"/>
</dbReference>
<dbReference type="GO" id="GO:0008240">
    <property type="term" value="F:tripeptidyl-peptidase activity"/>
    <property type="evidence" value="ECO:0007669"/>
    <property type="project" value="UniProtKB-EC"/>
</dbReference>
<dbReference type="GO" id="GO:0006508">
    <property type="term" value="P:proteolysis"/>
    <property type="evidence" value="ECO:0007669"/>
    <property type="project" value="UniProtKB-KW"/>
</dbReference>
<dbReference type="CDD" id="cd04056">
    <property type="entry name" value="Peptidases_S53"/>
    <property type="match status" value="1"/>
</dbReference>
<dbReference type="CDD" id="cd11377">
    <property type="entry name" value="Pro-peptidase_S53"/>
    <property type="match status" value="1"/>
</dbReference>
<dbReference type="FunFam" id="3.40.50.200:FF:000015">
    <property type="entry name" value="Tripeptidyl peptidase A"/>
    <property type="match status" value="1"/>
</dbReference>
<dbReference type="Gene3D" id="3.40.50.200">
    <property type="entry name" value="Peptidase S8/S53 domain"/>
    <property type="match status" value="1"/>
</dbReference>
<dbReference type="InterPro" id="IPR000209">
    <property type="entry name" value="Peptidase_S8/S53_dom"/>
</dbReference>
<dbReference type="InterPro" id="IPR036852">
    <property type="entry name" value="Peptidase_S8/S53_dom_sf"/>
</dbReference>
<dbReference type="InterPro" id="IPR023828">
    <property type="entry name" value="Peptidase_S8_Ser-AS"/>
</dbReference>
<dbReference type="InterPro" id="IPR015366">
    <property type="entry name" value="S53_propep"/>
</dbReference>
<dbReference type="InterPro" id="IPR030400">
    <property type="entry name" value="Sedolisin_dom"/>
</dbReference>
<dbReference type="InterPro" id="IPR050819">
    <property type="entry name" value="Tripeptidyl-peptidase_I"/>
</dbReference>
<dbReference type="PANTHER" id="PTHR14218">
    <property type="entry name" value="PROTEASE S8 TRIPEPTIDYL PEPTIDASE I CLN2"/>
    <property type="match status" value="1"/>
</dbReference>
<dbReference type="PANTHER" id="PTHR14218:SF32">
    <property type="entry name" value="TRIPEPTIDYL PEPTIDASE SED3 (AFU_ORTHOLOGUE AFUA_3G08930)"/>
    <property type="match status" value="1"/>
</dbReference>
<dbReference type="Pfam" id="PF00082">
    <property type="entry name" value="Peptidase_S8"/>
    <property type="match status" value="1"/>
</dbReference>
<dbReference type="Pfam" id="PF09286">
    <property type="entry name" value="Pro-kuma_activ"/>
    <property type="match status" value="1"/>
</dbReference>
<dbReference type="SMART" id="SM00944">
    <property type="entry name" value="Pro-kuma_activ"/>
    <property type="match status" value="1"/>
</dbReference>
<dbReference type="SUPFAM" id="SSF54897">
    <property type="entry name" value="Protease propeptides/inhibitors"/>
    <property type="match status" value="1"/>
</dbReference>
<dbReference type="SUPFAM" id="SSF52743">
    <property type="entry name" value="Subtilisin-like"/>
    <property type="match status" value="1"/>
</dbReference>
<dbReference type="PROSITE" id="PS51695">
    <property type="entry name" value="SEDOLISIN"/>
    <property type="match status" value="1"/>
</dbReference>
<sequence length="601" mass="65913">MVSFTLRAIGACLVSLPALVTAAPTSHISGDFQVLEQLHEVPQGWVQTGSPAPSSQLKFKLALQQDKAAAFEQHVMDISNPKHENYGKHMTQEEVDAFLQPPAHMTDSVFNWLASEGIPKHSIKADTDWLTFTTTVQKAEKLLNTRFYNFKNTIDNTQVIRTLQYSVAETVAPYVHMIQPTTKFSAPRPELSSVFTSDLEITSSADVDCNVTITPDCIRDLYKMGNTFAKKDPRNRLGISGYLEQYARLDDFSTFIDMFVPSLKGTTFDFKSINGGKNEQNSSLDSVEASLDVDYAIGLSGALSTYYGTAGRGMLIPDLDQPNITNNNNEPYLEQLHYLLGLPDSELPAVLSTSYGENEQSVPKKYTDSACHLFARLGARGVSVIFSSGDTGVGSACQSNDGKKITKFNPIFPAACPFVTSVGGTHQINPEVAIHFSSGGFSERFSRPWYQELDVNHYLQHELEHGKWDGMYNPSGRGFPDVSAQSYKFATRDHGRTIGVSGTSASAPLFAGVVSILNSIRLAHHKPRLGFLNPWLYTIGRSGFTDIVHGGSDGCTGTDQYSHLPTPYVPGASWNATRGWDPVTGLGTPNFETLSKLVLQY</sequence>
<gene>
    <name type="primary">SED4</name>
    <name type="ORF">MCYG_05446</name>
</gene>
<proteinExistence type="inferred from homology"/>